<evidence type="ECO:0000256" key="1">
    <source>
        <dbReference type="SAM" id="MobiDB-lite"/>
    </source>
</evidence>
<protein>
    <recommendedName>
        <fullName>Putative F-box protein At1g32140</fullName>
    </recommendedName>
</protein>
<accession>Q9FVQ9</accession>
<name>FB29_ARATH</name>
<proteinExistence type="predicted"/>
<feature type="chain" id="PRO_0000283305" description="Putative F-box protein At1g32140">
    <location>
        <begin position="1"/>
        <end position="591"/>
    </location>
</feature>
<feature type="domain" description="F-box">
    <location>
        <begin position="2"/>
        <end position="49"/>
    </location>
</feature>
<feature type="region of interest" description="Disordered" evidence="1">
    <location>
        <begin position="567"/>
        <end position="591"/>
    </location>
</feature>
<feature type="compositionally biased region" description="Basic residues" evidence="1">
    <location>
        <begin position="567"/>
        <end position="581"/>
    </location>
</feature>
<organism>
    <name type="scientific">Arabidopsis thaliana</name>
    <name type="common">Mouse-ear cress</name>
    <dbReference type="NCBI Taxonomy" id="3702"/>
    <lineage>
        <taxon>Eukaryota</taxon>
        <taxon>Viridiplantae</taxon>
        <taxon>Streptophyta</taxon>
        <taxon>Embryophyta</taxon>
        <taxon>Tracheophyta</taxon>
        <taxon>Spermatophyta</taxon>
        <taxon>Magnoliopsida</taxon>
        <taxon>eudicotyledons</taxon>
        <taxon>Gunneridae</taxon>
        <taxon>Pentapetalae</taxon>
        <taxon>rosids</taxon>
        <taxon>malvids</taxon>
        <taxon>Brassicales</taxon>
        <taxon>Brassicaceae</taxon>
        <taxon>Camelineae</taxon>
        <taxon>Arabidopsis</taxon>
    </lineage>
</organism>
<dbReference type="EMBL" id="AC084165">
    <property type="protein sequence ID" value="AAG23440.1"/>
    <property type="molecule type" value="Genomic_DNA"/>
</dbReference>
<dbReference type="EMBL" id="CP002684">
    <property type="protein sequence ID" value="AEE31440.1"/>
    <property type="molecule type" value="Genomic_DNA"/>
</dbReference>
<dbReference type="PIR" id="G86445">
    <property type="entry name" value="G86445"/>
</dbReference>
<dbReference type="RefSeq" id="NP_174493.1">
    <property type="nucleotide sequence ID" value="NM_102947.1"/>
</dbReference>
<dbReference type="FunCoup" id="Q9FVQ9">
    <property type="interactions" value="1"/>
</dbReference>
<dbReference type="STRING" id="3702.Q9FVQ9"/>
<dbReference type="iPTMnet" id="Q9FVQ9"/>
<dbReference type="PaxDb" id="3702-AT1G32140.1"/>
<dbReference type="EnsemblPlants" id="AT1G32140.1">
    <property type="protein sequence ID" value="AT1G32140.1"/>
    <property type="gene ID" value="AT1G32140"/>
</dbReference>
<dbReference type="GeneID" id="840106"/>
<dbReference type="Gramene" id="AT1G32140.1">
    <property type="protein sequence ID" value="AT1G32140.1"/>
    <property type="gene ID" value="AT1G32140"/>
</dbReference>
<dbReference type="KEGG" id="ath:AT1G32140"/>
<dbReference type="Araport" id="AT1G32140"/>
<dbReference type="TAIR" id="AT1G32140"/>
<dbReference type="HOGENOM" id="CLU_415254_0_0_1"/>
<dbReference type="InParanoid" id="Q9FVQ9"/>
<dbReference type="OMA" id="EIWMTIK"/>
<dbReference type="PhylomeDB" id="Q9FVQ9"/>
<dbReference type="PRO" id="PR:Q9FVQ9"/>
<dbReference type="Proteomes" id="UP000006548">
    <property type="component" value="Chromosome 1"/>
</dbReference>
<dbReference type="ExpressionAtlas" id="Q9FVQ9">
    <property type="expression patterns" value="baseline"/>
</dbReference>
<dbReference type="InterPro" id="IPR050233">
    <property type="entry name" value="A_thaliana_F-box"/>
</dbReference>
<dbReference type="InterPro" id="IPR006527">
    <property type="entry name" value="F-box-assoc_dom_typ1"/>
</dbReference>
<dbReference type="InterPro" id="IPR017451">
    <property type="entry name" value="F-box-assoc_interact_dom"/>
</dbReference>
<dbReference type="InterPro" id="IPR036047">
    <property type="entry name" value="F-box-like_dom_sf"/>
</dbReference>
<dbReference type="InterPro" id="IPR001810">
    <property type="entry name" value="F-box_dom"/>
</dbReference>
<dbReference type="NCBIfam" id="TIGR01640">
    <property type="entry name" value="F_box_assoc_1"/>
    <property type="match status" value="2"/>
</dbReference>
<dbReference type="PANTHER" id="PTHR47993:SF134">
    <property type="entry name" value="F-BOX DOMAIN-CONTAINING PROTEIN"/>
    <property type="match status" value="1"/>
</dbReference>
<dbReference type="PANTHER" id="PTHR47993">
    <property type="entry name" value="OS09G0372900 PROTEIN-RELATED"/>
    <property type="match status" value="1"/>
</dbReference>
<dbReference type="Pfam" id="PF00646">
    <property type="entry name" value="F-box"/>
    <property type="match status" value="1"/>
</dbReference>
<dbReference type="Pfam" id="PF07734">
    <property type="entry name" value="FBA_1"/>
    <property type="match status" value="2"/>
</dbReference>
<dbReference type="SUPFAM" id="SSF81383">
    <property type="entry name" value="F-box domain"/>
    <property type="match status" value="1"/>
</dbReference>
<keyword id="KW-1185">Reference proteome</keyword>
<gene>
    <name type="ordered locus">At1g32140</name>
    <name type="ORF">F3C3.15</name>
</gene>
<sequence>MTMMSDLSLDLVEEILCRVPITSLKAVRSSCKLWNVLSKNRILCKTEARNQFLGFTIMNHRLYSMRFNLHGIGLNENSEEFIDPSIKPIGNLLNQVEISKVFYCEGLLLCVTRNHSSKLVVWNPYLGEIRWIKTRNDYHIGVTYALGYDNNKNHMILRFFSEQGYYEIYDMNSSDSWDCFYGIPNKGLKCYQPGASLNGNAYFLTEGREVMEGYDCLLGFDFTTKKFGPLLSLSFSHDFIETGRLSCVKGEKLAVLYQRCYTYEMEVWVTTKIEPNAVSWSKFLAVEMEPLTSLKFNDDSGSFFIDEEKKIVVVFDIDESERNNTAYIIGDYGCLKEVDLDEVVNPQESVEVGDRIYSFSPFVCSCSYVPSLVKFKEDAEHERKDKKRKSKRKRTNKDGYDFILCFDFTTERFGQILPLPFKHSFRDTWTLSSVKEEKLAVAVLYWKNTCVMIEIWMTIKIDPNVESWSKFLRVDRKPCIDLRFDDRNDSFFIDEEKKVVVFFSSDKVKTSTAYVIGDNRYLRTVDLEKAANSQESVEVGERVYCFSPLVCSCSYYVPSLVKINHNAGRKRKEKKTKRKSKDKQMKLSNKV</sequence>
<reference key="1">
    <citation type="journal article" date="2000" name="Nature">
        <title>Sequence and analysis of chromosome 1 of the plant Arabidopsis thaliana.</title>
        <authorList>
            <person name="Theologis A."/>
            <person name="Ecker J.R."/>
            <person name="Palm C.J."/>
            <person name="Federspiel N.A."/>
            <person name="Kaul S."/>
            <person name="White O."/>
            <person name="Alonso J."/>
            <person name="Altafi H."/>
            <person name="Araujo R."/>
            <person name="Bowman C.L."/>
            <person name="Brooks S.Y."/>
            <person name="Buehler E."/>
            <person name="Chan A."/>
            <person name="Chao Q."/>
            <person name="Chen H."/>
            <person name="Cheuk R.F."/>
            <person name="Chin C.W."/>
            <person name="Chung M.K."/>
            <person name="Conn L."/>
            <person name="Conway A.B."/>
            <person name="Conway A.R."/>
            <person name="Creasy T.H."/>
            <person name="Dewar K."/>
            <person name="Dunn P."/>
            <person name="Etgu P."/>
            <person name="Feldblyum T.V."/>
            <person name="Feng J.-D."/>
            <person name="Fong B."/>
            <person name="Fujii C.Y."/>
            <person name="Gill J.E."/>
            <person name="Goldsmith A.D."/>
            <person name="Haas B."/>
            <person name="Hansen N.F."/>
            <person name="Hughes B."/>
            <person name="Huizar L."/>
            <person name="Hunter J.L."/>
            <person name="Jenkins J."/>
            <person name="Johnson-Hopson C."/>
            <person name="Khan S."/>
            <person name="Khaykin E."/>
            <person name="Kim C.J."/>
            <person name="Koo H.L."/>
            <person name="Kremenetskaia I."/>
            <person name="Kurtz D.B."/>
            <person name="Kwan A."/>
            <person name="Lam B."/>
            <person name="Langin-Hooper S."/>
            <person name="Lee A."/>
            <person name="Lee J.M."/>
            <person name="Lenz C.A."/>
            <person name="Li J.H."/>
            <person name="Li Y.-P."/>
            <person name="Lin X."/>
            <person name="Liu S.X."/>
            <person name="Liu Z.A."/>
            <person name="Luros J.S."/>
            <person name="Maiti R."/>
            <person name="Marziali A."/>
            <person name="Militscher J."/>
            <person name="Miranda M."/>
            <person name="Nguyen M."/>
            <person name="Nierman W.C."/>
            <person name="Osborne B.I."/>
            <person name="Pai G."/>
            <person name="Peterson J."/>
            <person name="Pham P.K."/>
            <person name="Rizzo M."/>
            <person name="Rooney T."/>
            <person name="Rowley D."/>
            <person name="Sakano H."/>
            <person name="Salzberg S.L."/>
            <person name="Schwartz J.R."/>
            <person name="Shinn P."/>
            <person name="Southwick A.M."/>
            <person name="Sun H."/>
            <person name="Tallon L.J."/>
            <person name="Tambunga G."/>
            <person name="Toriumi M.J."/>
            <person name="Town C.D."/>
            <person name="Utterback T."/>
            <person name="Van Aken S."/>
            <person name="Vaysberg M."/>
            <person name="Vysotskaia V.S."/>
            <person name="Walker M."/>
            <person name="Wu D."/>
            <person name="Yu G."/>
            <person name="Fraser C.M."/>
            <person name="Venter J.C."/>
            <person name="Davis R.W."/>
        </authorList>
    </citation>
    <scope>NUCLEOTIDE SEQUENCE [LARGE SCALE GENOMIC DNA]</scope>
    <source>
        <strain>cv. Columbia</strain>
    </source>
</reference>
<reference key="2">
    <citation type="journal article" date="2017" name="Plant J.">
        <title>Araport11: a complete reannotation of the Arabidopsis thaliana reference genome.</title>
        <authorList>
            <person name="Cheng C.Y."/>
            <person name="Krishnakumar V."/>
            <person name="Chan A.P."/>
            <person name="Thibaud-Nissen F."/>
            <person name="Schobel S."/>
            <person name="Town C.D."/>
        </authorList>
    </citation>
    <scope>GENOME REANNOTATION</scope>
    <source>
        <strain>cv. Columbia</strain>
    </source>
</reference>